<organism>
    <name type="scientific">Treponema denticola (strain ATCC 35405 / DSM 14222 / CIP 103919 / JCM 8153 / KCTC 15104)</name>
    <dbReference type="NCBI Taxonomy" id="243275"/>
    <lineage>
        <taxon>Bacteria</taxon>
        <taxon>Pseudomonadati</taxon>
        <taxon>Spirochaetota</taxon>
        <taxon>Spirochaetia</taxon>
        <taxon>Spirochaetales</taxon>
        <taxon>Treponemataceae</taxon>
        <taxon>Treponema</taxon>
    </lineage>
</organism>
<protein>
    <recommendedName>
        <fullName evidence="1">Ribosome-recycling factor</fullName>
        <shortName evidence="1">RRF</shortName>
    </recommendedName>
    <alternativeName>
        <fullName evidence="1">Ribosome-releasing factor</fullName>
    </alternativeName>
</protein>
<sequence>MIEEVKKNCEEKMKKTVVALKEEFNMLRTGRASSALFDKIRVNCYGESTPLNQLANISIPEARLVVIQPWDKGLLVEIEKAVLQADLSVNPTNDGKVIRIAIPPLTEDRRKDLAKKAKTIAENSRVSVRNIRRDGIDEAKKLQKDGKISEDQLKTAEDAFQKSTDAYIAEINKVLEAKEKEIMEN</sequence>
<keyword id="KW-0963">Cytoplasm</keyword>
<keyword id="KW-0648">Protein biosynthesis</keyword>
<keyword id="KW-1185">Reference proteome</keyword>
<comment type="function">
    <text evidence="1">Responsible for the release of ribosomes from messenger RNA at the termination of protein biosynthesis. May increase the efficiency of translation by recycling ribosomes from one round of translation to another.</text>
</comment>
<comment type="subcellular location">
    <subcellularLocation>
        <location evidence="1">Cytoplasm</location>
    </subcellularLocation>
</comment>
<comment type="similarity">
    <text evidence="1">Belongs to the RRF family.</text>
</comment>
<dbReference type="EMBL" id="AE017226">
    <property type="protein sequence ID" value="AAS12863.1"/>
    <property type="molecule type" value="Genomic_DNA"/>
</dbReference>
<dbReference type="RefSeq" id="NP_972944.1">
    <property type="nucleotide sequence ID" value="NC_002967.9"/>
</dbReference>
<dbReference type="RefSeq" id="WP_002675802.1">
    <property type="nucleotide sequence ID" value="NC_002967.9"/>
</dbReference>
<dbReference type="SMR" id="P61310"/>
<dbReference type="STRING" id="243275.TDE_2345"/>
<dbReference type="PaxDb" id="243275-TDE_2345"/>
<dbReference type="GeneID" id="2739440"/>
<dbReference type="KEGG" id="tde:TDE_2345"/>
<dbReference type="PATRIC" id="fig|243275.7.peg.2213"/>
<dbReference type="eggNOG" id="COG0233">
    <property type="taxonomic scope" value="Bacteria"/>
</dbReference>
<dbReference type="HOGENOM" id="CLU_073981_2_0_12"/>
<dbReference type="OrthoDB" id="9804006at2"/>
<dbReference type="Proteomes" id="UP000008212">
    <property type="component" value="Chromosome"/>
</dbReference>
<dbReference type="GO" id="GO:0005737">
    <property type="term" value="C:cytoplasm"/>
    <property type="evidence" value="ECO:0007669"/>
    <property type="project" value="UniProtKB-SubCell"/>
</dbReference>
<dbReference type="GO" id="GO:0043023">
    <property type="term" value="F:ribosomal large subunit binding"/>
    <property type="evidence" value="ECO:0007669"/>
    <property type="project" value="TreeGrafter"/>
</dbReference>
<dbReference type="GO" id="GO:0006415">
    <property type="term" value="P:translational termination"/>
    <property type="evidence" value="ECO:0007669"/>
    <property type="project" value="UniProtKB-UniRule"/>
</dbReference>
<dbReference type="CDD" id="cd00520">
    <property type="entry name" value="RRF"/>
    <property type="match status" value="1"/>
</dbReference>
<dbReference type="FunFam" id="1.10.132.20:FF:000001">
    <property type="entry name" value="Ribosome-recycling factor"/>
    <property type="match status" value="1"/>
</dbReference>
<dbReference type="FunFam" id="3.30.1360.40:FF:000001">
    <property type="entry name" value="Ribosome-recycling factor"/>
    <property type="match status" value="1"/>
</dbReference>
<dbReference type="Gene3D" id="3.30.1360.40">
    <property type="match status" value="1"/>
</dbReference>
<dbReference type="Gene3D" id="1.10.132.20">
    <property type="entry name" value="Ribosome-recycling factor"/>
    <property type="match status" value="1"/>
</dbReference>
<dbReference type="HAMAP" id="MF_00040">
    <property type="entry name" value="RRF"/>
    <property type="match status" value="1"/>
</dbReference>
<dbReference type="InterPro" id="IPR002661">
    <property type="entry name" value="Ribosome_recyc_fac"/>
</dbReference>
<dbReference type="InterPro" id="IPR023584">
    <property type="entry name" value="Ribosome_recyc_fac_dom"/>
</dbReference>
<dbReference type="InterPro" id="IPR036191">
    <property type="entry name" value="RRF_sf"/>
</dbReference>
<dbReference type="NCBIfam" id="TIGR00496">
    <property type="entry name" value="frr"/>
    <property type="match status" value="1"/>
</dbReference>
<dbReference type="PANTHER" id="PTHR20982:SF3">
    <property type="entry name" value="MITOCHONDRIAL RIBOSOME RECYCLING FACTOR PSEUDO 1"/>
    <property type="match status" value="1"/>
</dbReference>
<dbReference type="PANTHER" id="PTHR20982">
    <property type="entry name" value="RIBOSOME RECYCLING FACTOR"/>
    <property type="match status" value="1"/>
</dbReference>
<dbReference type="Pfam" id="PF01765">
    <property type="entry name" value="RRF"/>
    <property type="match status" value="1"/>
</dbReference>
<dbReference type="SUPFAM" id="SSF55194">
    <property type="entry name" value="Ribosome recycling factor, RRF"/>
    <property type="match status" value="1"/>
</dbReference>
<proteinExistence type="inferred from homology"/>
<gene>
    <name evidence="1" type="primary">frr</name>
    <name type="ordered locus">TDE_2345</name>
</gene>
<evidence type="ECO:0000255" key="1">
    <source>
        <dbReference type="HAMAP-Rule" id="MF_00040"/>
    </source>
</evidence>
<name>RRF_TREDE</name>
<accession>P61310</accession>
<reference key="1">
    <citation type="journal article" date="2004" name="Proc. Natl. Acad. Sci. U.S.A.">
        <title>Comparison of the genome of the oral pathogen Treponema denticola with other spirochete genomes.</title>
        <authorList>
            <person name="Seshadri R."/>
            <person name="Myers G.S.A."/>
            <person name="Tettelin H."/>
            <person name="Eisen J.A."/>
            <person name="Heidelberg J.F."/>
            <person name="Dodson R.J."/>
            <person name="Davidsen T.M."/>
            <person name="DeBoy R.T."/>
            <person name="Fouts D.E."/>
            <person name="Haft D.H."/>
            <person name="Selengut J."/>
            <person name="Ren Q."/>
            <person name="Brinkac L.M."/>
            <person name="Madupu R."/>
            <person name="Kolonay J.F."/>
            <person name="Durkin S.A."/>
            <person name="Daugherty S.C."/>
            <person name="Shetty J."/>
            <person name="Shvartsbeyn A."/>
            <person name="Gebregeorgis E."/>
            <person name="Geer K."/>
            <person name="Tsegaye G."/>
            <person name="Malek J.A."/>
            <person name="Ayodeji B."/>
            <person name="Shatsman S."/>
            <person name="McLeod M.P."/>
            <person name="Smajs D."/>
            <person name="Howell J.K."/>
            <person name="Pal S."/>
            <person name="Amin A."/>
            <person name="Vashisth P."/>
            <person name="McNeill T.Z."/>
            <person name="Xiang Q."/>
            <person name="Sodergren E."/>
            <person name="Baca E."/>
            <person name="Weinstock G.M."/>
            <person name="Norris S.J."/>
            <person name="Fraser C.M."/>
            <person name="Paulsen I.T."/>
        </authorList>
    </citation>
    <scope>NUCLEOTIDE SEQUENCE [LARGE SCALE GENOMIC DNA]</scope>
    <source>
        <strain>ATCC 35405 / DSM 14222 / CIP 103919 / JCM 8153 / KCTC 15104</strain>
    </source>
</reference>
<feature type="chain" id="PRO_0000167569" description="Ribosome-recycling factor">
    <location>
        <begin position="1"/>
        <end position="185"/>
    </location>
</feature>